<sequence>MGARKKISAEKRKEALKTMYFAKLQNVPTSPRKMRLVADMIRGMEVNRALGVLKFSSKEAAARVEKLLRSAIANWEQKNERKAESGELFVTKIFVDGGATLKRMRPAPQGRGYRIRKRSNHVTLFVDSKSNNEDQN</sequence>
<comment type="function">
    <text evidence="1">This protein binds specifically to 23S rRNA; its binding is stimulated by other ribosomal proteins, e.g. L4, L17, and L20. It is important during the early stages of 50S assembly. It makes multiple contacts with different domains of the 23S rRNA in the assembled 50S subunit and ribosome (By similarity).</text>
</comment>
<comment type="function">
    <text evidence="1">The globular domain of the protein is located near the polypeptide exit tunnel on the outside of the subunit, while an extended beta-hairpin is found that lines the wall of the exit tunnel in the center of the 70S ribosome.</text>
</comment>
<comment type="subunit">
    <text evidence="1">Part of the 50S ribosomal subunit.</text>
</comment>
<comment type="similarity">
    <text evidence="1">Belongs to the universal ribosomal protein uL22 family.</text>
</comment>
<keyword id="KW-0687">Ribonucleoprotein</keyword>
<keyword id="KW-0689">Ribosomal protein</keyword>
<keyword id="KW-0694">RNA-binding</keyword>
<keyword id="KW-0699">rRNA-binding</keyword>
<dbReference type="EMBL" id="AP006841">
    <property type="protein sequence ID" value="BAD50919.1"/>
    <property type="molecule type" value="Genomic_DNA"/>
</dbReference>
<dbReference type="RefSeq" id="WP_002558069.1">
    <property type="nucleotide sequence ID" value="NC_006347.1"/>
</dbReference>
<dbReference type="RefSeq" id="YP_101453.1">
    <property type="nucleotide sequence ID" value="NC_006347.1"/>
</dbReference>
<dbReference type="SMR" id="Q64NL3"/>
<dbReference type="STRING" id="295405.BF4176"/>
<dbReference type="GeneID" id="93114620"/>
<dbReference type="KEGG" id="bfr:BF4176"/>
<dbReference type="PATRIC" id="fig|295405.11.peg.4030"/>
<dbReference type="HOGENOM" id="CLU_083987_3_1_10"/>
<dbReference type="OrthoDB" id="9805969at2"/>
<dbReference type="Proteomes" id="UP000002197">
    <property type="component" value="Chromosome"/>
</dbReference>
<dbReference type="GO" id="GO:0022625">
    <property type="term" value="C:cytosolic large ribosomal subunit"/>
    <property type="evidence" value="ECO:0007669"/>
    <property type="project" value="TreeGrafter"/>
</dbReference>
<dbReference type="GO" id="GO:0019843">
    <property type="term" value="F:rRNA binding"/>
    <property type="evidence" value="ECO:0007669"/>
    <property type="project" value="UniProtKB-UniRule"/>
</dbReference>
<dbReference type="GO" id="GO:0003735">
    <property type="term" value="F:structural constituent of ribosome"/>
    <property type="evidence" value="ECO:0007669"/>
    <property type="project" value="InterPro"/>
</dbReference>
<dbReference type="GO" id="GO:0006412">
    <property type="term" value="P:translation"/>
    <property type="evidence" value="ECO:0007669"/>
    <property type="project" value="UniProtKB-UniRule"/>
</dbReference>
<dbReference type="CDD" id="cd00336">
    <property type="entry name" value="Ribosomal_L22"/>
    <property type="match status" value="1"/>
</dbReference>
<dbReference type="FunFam" id="3.90.470.10:FF:000008">
    <property type="entry name" value="50S ribosomal protein L22"/>
    <property type="match status" value="1"/>
</dbReference>
<dbReference type="Gene3D" id="3.90.470.10">
    <property type="entry name" value="Ribosomal protein L22/L17"/>
    <property type="match status" value="1"/>
</dbReference>
<dbReference type="HAMAP" id="MF_01331_B">
    <property type="entry name" value="Ribosomal_uL22_B"/>
    <property type="match status" value="1"/>
</dbReference>
<dbReference type="InterPro" id="IPR001063">
    <property type="entry name" value="Ribosomal_uL22"/>
</dbReference>
<dbReference type="InterPro" id="IPR005727">
    <property type="entry name" value="Ribosomal_uL22_bac/chlpt-type"/>
</dbReference>
<dbReference type="InterPro" id="IPR047867">
    <property type="entry name" value="Ribosomal_uL22_bac/org-type"/>
</dbReference>
<dbReference type="InterPro" id="IPR036394">
    <property type="entry name" value="Ribosomal_uL22_sf"/>
</dbReference>
<dbReference type="NCBIfam" id="TIGR01044">
    <property type="entry name" value="rplV_bact"/>
    <property type="match status" value="1"/>
</dbReference>
<dbReference type="PANTHER" id="PTHR13501">
    <property type="entry name" value="CHLOROPLAST 50S RIBOSOMAL PROTEIN L22-RELATED"/>
    <property type="match status" value="1"/>
</dbReference>
<dbReference type="PANTHER" id="PTHR13501:SF8">
    <property type="entry name" value="LARGE RIBOSOMAL SUBUNIT PROTEIN UL22M"/>
    <property type="match status" value="1"/>
</dbReference>
<dbReference type="Pfam" id="PF00237">
    <property type="entry name" value="Ribosomal_L22"/>
    <property type="match status" value="1"/>
</dbReference>
<dbReference type="SUPFAM" id="SSF54843">
    <property type="entry name" value="Ribosomal protein L22"/>
    <property type="match status" value="1"/>
</dbReference>
<accession>Q64NL3</accession>
<feature type="chain" id="PRO_0000243121" description="Large ribosomal subunit protein uL22">
    <location>
        <begin position="1"/>
        <end position="136"/>
    </location>
</feature>
<protein>
    <recommendedName>
        <fullName evidence="1">Large ribosomal subunit protein uL22</fullName>
    </recommendedName>
    <alternativeName>
        <fullName evidence="2">50S ribosomal protein L22</fullName>
    </alternativeName>
</protein>
<reference key="1">
    <citation type="journal article" date="2004" name="Proc. Natl. Acad. Sci. U.S.A.">
        <title>Genomic analysis of Bacteroides fragilis reveals extensive DNA inversions regulating cell surface adaptation.</title>
        <authorList>
            <person name="Kuwahara T."/>
            <person name="Yamashita A."/>
            <person name="Hirakawa H."/>
            <person name="Nakayama H."/>
            <person name="Toh H."/>
            <person name="Okada N."/>
            <person name="Kuhara S."/>
            <person name="Hattori M."/>
            <person name="Hayashi T."/>
            <person name="Ohnishi Y."/>
        </authorList>
    </citation>
    <scope>NUCLEOTIDE SEQUENCE [LARGE SCALE GENOMIC DNA]</scope>
    <source>
        <strain>YCH46</strain>
    </source>
</reference>
<proteinExistence type="inferred from homology"/>
<name>RL22_BACFR</name>
<evidence type="ECO:0000255" key="1">
    <source>
        <dbReference type="HAMAP-Rule" id="MF_01331"/>
    </source>
</evidence>
<evidence type="ECO:0000305" key="2"/>
<organism>
    <name type="scientific">Bacteroides fragilis (strain YCH46)</name>
    <dbReference type="NCBI Taxonomy" id="295405"/>
    <lineage>
        <taxon>Bacteria</taxon>
        <taxon>Pseudomonadati</taxon>
        <taxon>Bacteroidota</taxon>
        <taxon>Bacteroidia</taxon>
        <taxon>Bacteroidales</taxon>
        <taxon>Bacteroidaceae</taxon>
        <taxon>Bacteroides</taxon>
    </lineage>
</organism>
<gene>
    <name evidence="1" type="primary">rplV</name>
    <name type="ordered locus">BF4176</name>
</gene>